<keyword id="KW-0687">Ribonucleoprotein</keyword>
<keyword id="KW-0689">Ribosomal protein</keyword>
<keyword id="KW-0694">RNA-binding</keyword>
<keyword id="KW-0699">rRNA-binding</keyword>
<gene>
    <name evidence="1" type="primary">rplU</name>
    <name type="ordered locus">VV1_0671</name>
</gene>
<organism>
    <name type="scientific">Vibrio vulnificus (strain CMCP6)</name>
    <dbReference type="NCBI Taxonomy" id="216895"/>
    <lineage>
        <taxon>Bacteria</taxon>
        <taxon>Pseudomonadati</taxon>
        <taxon>Pseudomonadota</taxon>
        <taxon>Gammaproteobacteria</taxon>
        <taxon>Vibrionales</taxon>
        <taxon>Vibrionaceae</taxon>
        <taxon>Vibrio</taxon>
    </lineage>
</organism>
<proteinExistence type="inferred from homology"/>
<dbReference type="EMBL" id="AE016795">
    <property type="protein sequence ID" value="AAO09183.1"/>
    <property type="molecule type" value="Genomic_DNA"/>
</dbReference>
<dbReference type="RefSeq" id="WP_000271393.1">
    <property type="nucleotide sequence ID" value="NC_004459.3"/>
</dbReference>
<dbReference type="SMR" id="Q8DEC4"/>
<dbReference type="GeneID" id="95679033"/>
<dbReference type="KEGG" id="vvu:VV1_0671"/>
<dbReference type="HOGENOM" id="CLU_061463_3_3_6"/>
<dbReference type="Proteomes" id="UP000002275">
    <property type="component" value="Chromosome 1"/>
</dbReference>
<dbReference type="GO" id="GO:0005737">
    <property type="term" value="C:cytoplasm"/>
    <property type="evidence" value="ECO:0007669"/>
    <property type="project" value="UniProtKB-ARBA"/>
</dbReference>
<dbReference type="GO" id="GO:1990904">
    <property type="term" value="C:ribonucleoprotein complex"/>
    <property type="evidence" value="ECO:0007669"/>
    <property type="project" value="UniProtKB-KW"/>
</dbReference>
<dbReference type="GO" id="GO:0005840">
    <property type="term" value="C:ribosome"/>
    <property type="evidence" value="ECO:0007669"/>
    <property type="project" value="UniProtKB-KW"/>
</dbReference>
<dbReference type="GO" id="GO:0019843">
    <property type="term" value="F:rRNA binding"/>
    <property type="evidence" value="ECO:0007669"/>
    <property type="project" value="UniProtKB-UniRule"/>
</dbReference>
<dbReference type="GO" id="GO:0003735">
    <property type="term" value="F:structural constituent of ribosome"/>
    <property type="evidence" value="ECO:0007669"/>
    <property type="project" value="InterPro"/>
</dbReference>
<dbReference type="GO" id="GO:0006412">
    <property type="term" value="P:translation"/>
    <property type="evidence" value="ECO:0007669"/>
    <property type="project" value="UniProtKB-UniRule"/>
</dbReference>
<dbReference type="HAMAP" id="MF_01363">
    <property type="entry name" value="Ribosomal_bL21"/>
    <property type="match status" value="1"/>
</dbReference>
<dbReference type="InterPro" id="IPR028909">
    <property type="entry name" value="bL21-like"/>
</dbReference>
<dbReference type="InterPro" id="IPR036164">
    <property type="entry name" value="bL21-like_sf"/>
</dbReference>
<dbReference type="InterPro" id="IPR001787">
    <property type="entry name" value="Ribosomal_bL21"/>
</dbReference>
<dbReference type="InterPro" id="IPR018258">
    <property type="entry name" value="Ribosomal_bL21_CS"/>
</dbReference>
<dbReference type="NCBIfam" id="TIGR00061">
    <property type="entry name" value="L21"/>
    <property type="match status" value="1"/>
</dbReference>
<dbReference type="PANTHER" id="PTHR21349">
    <property type="entry name" value="50S RIBOSOMAL PROTEIN L21"/>
    <property type="match status" value="1"/>
</dbReference>
<dbReference type="PANTHER" id="PTHR21349:SF0">
    <property type="entry name" value="LARGE RIBOSOMAL SUBUNIT PROTEIN BL21M"/>
    <property type="match status" value="1"/>
</dbReference>
<dbReference type="Pfam" id="PF00829">
    <property type="entry name" value="Ribosomal_L21p"/>
    <property type="match status" value="1"/>
</dbReference>
<dbReference type="SUPFAM" id="SSF141091">
    <property type="entry name" value="L21p-like"/>
    <property type="match status" value="1"/>
</dbReference>
<dbReference type="PROSITE" id="PS01169">
    <property type="entry name" value="RIBOSOMAL_L21"/>
    <property type="match status" value="1"/>
</dbReference>
<evidence type="ECO:0000255" key="1">
    <source>
        <dbReference type="HAMAP-Rule" id="MF_01363"/>
    </source>
</evidence>
<evidence type="ECO:0000305" key="2"/>
<sequence>MYAVFQSGGKQHRVSEGQTLRLEKLDVETGATVEFDKVLLVANGEDIKVGAPLVEGGKVVAEVVQHGRGDKVKIVKFRRRKHSRKQQGHRQWFTEVKITGINA</sequence>
<comment type="function">
    <text evidence="1">This protein binds to 23S rRNA in the presence of protein L20.</text>
</comment>
<comment type="subunit">
    <text evidence="1">Part of the 50S ribosomal subunit. Contacts protein L20.</text>
</comment>
<comment type="similarity">
    <text evidence="1">Belongs to the bacterial ribosomal protein bL21 family.</text>
</comment>
<protein>
    <recommendedName>
        <fullName evidence="1">Large ribosomal subunit protein bL21</fullName>
    </recommendedName>
    <alternativeName>
        <fullName evidence="2">50S ribosomal protein L21</fullName>
    </alternativeName>
</protein>
<reference key="1">
    <citation type="submission" date="2002-12" db="EMBL/GenBank/DDBJ databases">
        <title>Complete genome sequence of Vibrio vulnificus CMCP6.</title>
        <authorList>
            <person name="Rhee J.H."/>
            <person name="Kim S.Y."/>
            <person name="Chung S.S."/>
            <person name="Kim J.J."/>
            <person name="Moon Y.H."/>
            <person name="Jeong H."/>
            <person name="Choy H.E."/>
        </authorList>
    </citation>
    <scope>NUCLEOTIDE SEQUENCE [LARGE SCALE GENOMIC DNA]</scope>
    <source>
        <strain>CMCP6</strain>
    </source>
</reference>
<name>RL21_VIBVU</name>
<feature type="chain" id="PRO_0000269424" description="Large ribosomal subunit protein bL21">
    <location>
        <begin position="1"/>
        <end position="103"/>
    </location>
</feature>
<accession>Q8DEC4</accession>